<keyword id="KW-0028">Amino-acid biosynthesis</keyword>
<keyword id="KW-0100">Branched-chain amino acid biosynthesis</keyword>
<keyword id="KW-0460">Magnesium</keyword>
<keyword id="KW-0479">Metal-binding</keyword>
<keyword id="KW-0521">NADP</keyword>
<keyword id="KW-0560">Oxidoreductase</keyword>
<keyword id="KW-1185">Reference proteome</keyword>
<proteinExistence type="inferred from homology"/>
<name>ILVC_MYCTA</name>
<feature type="chain" id="PRO_1000050543" description="Ketol-acid reductoisomerase (NADP(+))">
    <location>
        <begin position="1"/>
        <end position="337"/>
    </location>
</feature>
<feature type="domain" description="KARI N-terminal Rossmann" evidence="2">
    <location>
        <begin position="3"/>
        <end position="183"/>
    </location>
</feature>
<feature type="domain" description="KARI C-terminal knotted" evidence="3">
    <location>
        <begin position="184"/>
        <end position="329"/>
    </location>
</feature>
<feature type="active site" evidence="1">
    <location>
        <position position="109"/>
    </location>
</feature>
<feature type="binding site" evidence="1">
    <location>
        <begin position="26"/>
        <end position="29"/>
    </location>
    <ligand>
        <name>NADP(+)</name>
        <dbReference type="ChEBI" id="CHEBI:58349"/>
    </ligand>
</feature>
<feature type="binding site" evidence="1">
    <location>
        <position position="49"/>
    </location>
    <ligand>
        <name>NADP(+)</name>
        <dbReference type="ChEBI" id="CHEBI:58349"/>
    </ligand>
</feature>
<feature type="binding site" evidence="1">
    <location>
        <position position="52"/>
    </location>
    <ligand>
        <name>NADP(+)</name>
        <dbReference type="ChEBI" id="CHEBI:58349"/>
    </ligand>
</feature>
<feature type="binding site" evidence="1">
    <location>
        <position position="54"/>
    </location>
    <ligand>
        <name>NADP(+)</name>
        <dbReference type="ChEBI" id="CHEBI:58349"/>
    </ligand>
</feature>
<feature type="binding site" evidence="1">
    <location>
        <begin position="84"/>
        <end position="87"/>
    </location>
    <ligand>
        <name>NADP(+)</name>
        <dbReference type="ChEBI" id="CHEBI:58349"/>
    </ligand>
</feature>
<feature type="binding site" evidence="1">
    <location>
        <position position="135"/>
    </location>
    <ligand>
        <name>NADP(+)</name>
        <dbReference type="ChEBI" id="CHEBI:58349"/>
    </ligand>
</feature>
<feature type="binding site" evidence="1">
    <location>
        <position position="192"/>
    </location>
    <ligand>
        <name>Mg(2+)</name>
        <dbReference type="ChEBI" id="CHEBI:18420"/>
        <label>1</label>
    </ligand>
</feature>
<feature type="binding site" evidence="1">
    <location>
        <position position="192"/>
    </location>
    <ligand>
        <name>Mg(2+)</name>
        <dbReference type="ChEBI" id="CHEBI:18420"/>
        <label>2</label>
    </ligand>
</feature>
<feature type="binding site" evidence="1">
    <location>
        <position position="196"/>
    </location>
    <ligand>
        <name>Mg(2+)</name>
        <dbReference type="ChEBI" id="CHEBI:18420"/>
        <label>1</label>
    </ligand>
</feature>
<feature type="binding site" evidence="1">
    <location>
        <position position="228"/>
    </location>
    <ligand>
        <name>Mg(2+)</name>
        <dbReference type="ChEBI" id="CHEBI:18420"/>
        <label>2</label>
    </ligand>
</feature>
<feature type="binding site" evidence="1">
    <location>
        <position position="232"/>
    </location>
    <ligand>
        <name>Mg(2+)</name>
        <dbReference type="ChEBI" id="CHEBI:18420"/>
        <label>2</label>
    </ligand>
</feature>
<feature type="binding site" evidence="1">
    <location>
        <position position="253"/>
    </location>
    <ligand>
        <name>substrate</name>
    </ligand>
</feature>
<sequence>MALEMFYDDDADLSIIQGRKVGVIGYGSQGHAHSLSLRDSGVQVRVGLKQGSRSRPKVEEQGLDVDTPAEVAKWADVVMVLAPDTAQAEIFAGDIEPNLKPGDALFFGHGLNVHFGLIKPPADVAVAMVAPKGPGHLVRRQFVDGKGVPCLVAVEQDPRGDGLALALSYAKAIGGTRAGVIKTTFKDETETDLFGEQTVLCGGTEELVKAGFEVMVEAGYPAELAYFEVLHELKLIVDLMYEGGLARMYYSVSDTAEFGGYLSGPRVIDAGTKERMRDILREIQDGSFVHKLVADVEGGNKQLEELRRQNAEHPIEVVGKKLRDLMSWVDRPITETA</sequence>
<reference key="1">
    <citation type="journal article" date="2008" name="PLoS ONE">
        <title>Genetic basis of virulence attenuation revealed by comparative genomic analysis of Mycobacterium tuberculosis strain H37Ra versus H37Rv.</title>
        <authorList>
            <person name="Zheng H."/>
            <person name="Lu L."/>
            <person name="Wang B."/>
            <person name="Pu S."/>
            <person name="Zhang X."/>
            <person name="Zhu G."/>
            <person name="Shi W."/>
            <person name="Zhang L."/>
            <person name="Wang H."/>
            <person name="Wang S."/>
            <person name="Zhao G."/>
            <person name="Zhang Y."/>
        </authorList>
    </citation>
    <scope>NUCLEOTIDE SEQUENCE [LARGE SCALE GENOMIC DNA]</scope>
    <source>
        <strain>ATCC 25177 / H37Ra</strain>
    </source>
</reference>
<dbReference type="EC" id="1.1.1.86" evidence="1"/>
<dbReference type="EMBL" id="CP000611">
    <property type="protein sequence ID" value="ABQ74813.1"/>
    <property type="status" value="ALT_INIT"/>
    <property type="molecule type" value="Genomic_DNA"/>
</dbReference>
<dbReference type="SMR" id="A5U713"/>
<dbReference type="KEGG" id="mra:MRA_3031"/>
<dbReference type="eggNOG" id="COG0059">
    <property type="taxonomic scope" value="Bacteria"/>
</dbReference>
<dbReference type="HOGENOM" id="CLU_033821_0_1_11"/>
<dbReference type="UniPathway" id="UPA00047">
    <property type="reaction ID" value="UER00056"/>
</dbReference>
<dbReference type="UniPathway" id="UPA00049">
    <property type="reaction ID" value="UER00060"/>
</dbReference>
<dbReference type="Proteomes" id="UP000001988">
    <property type="component" value="Chromosome"/>
</dbReference>
<dbReference type="GO" id="GO:0005829">
    <property type="term" value="C:cytosol"/>
    <property type="evidence" value="ECO:0007669"/>
    <property type="project" value="TreeGrafter"/>
</dbReference>
<dbReference type="GO" id="GO:0004455">
    <property type="term" value="F:ketol-acid reductoisomerase activity"/>
    <property type="evidence" value="ECO:0007669"/>
    <property type="project" value="UniProtKB-UniRule"/>
</dbReference>
<dbReference type="GO" id="GO:0000287">
    <property type="term" value="F:magnesium ion binding"/>
    <property type="evidence" value="ECO:0007669"/>
    <property type="project" value="UniProtKB-UniRule"/>
</dbReference>
<dbReference type="GO" id="GO:0050661">
    <property type="term" value="F:NADP binding"/>
    <property type="evidence" value="ECO:0007669"/>
    <property type="project" value="InterPro"/>
</dbReference>
<dbReference type="GO" id="GO:0009097">
    <property type="term" value="P:isoleucine biosynthetic process"/>
    <property type="evidence" value="ECO:0007669"/>
    <property type="project" value="UniProtKB-UniRule"/>
</dbReference>
<dbReference type="GO" id="GO:0009099">
    <property type="term" value="P:L-valine biosynthetic process"/>
    <property type="evidence" value="ECO:0007669"/>
    <property type="project" value="UniProtKB-UniRule"/>
</dbReference>
<dbReference type="FunFam" id="3.40.50.720:FF:000023">
    <property type="entry name" value="Ketol-acid reductoisomerase (NADP(+))"/>
    <property type="match status" value="1"/>
</dbReference>
<dbReference type="Gene3D" id="6.10.240.10">
    <property type="match status" value="1"/>
</dbReference>
<dbReference type="Gene3D" id="3.40.50.720">
    <property type="entry name" value="NAD(P)-binding Rossmann-like Domain"/>
    <property type="match status" value="1"/>
</dbReference>
<dbReference type="HAMAP" id="MF_00435">
    <property type="entry name" value="IlvC"/>
    <property type="match status" value="1"/>
</dbReference>
<dbReference type="InterPro" id="IPR008927">
    <property type="entry name" value="6-PGluconate_DH-like_C_sf"/>
</dbReference>
<dbReference type="InterPro" id="IPR013023">
    <property type="entry name" value="KARI"/>
</dbReference>
<dbReference type="InterPro" id="IPR000506">
    <property type="entry name" value="KARI_C"/>
</dbReference>
<dbReference type="InterPro" id="IPR013116">
    <property type="entry name" value="KARI_N"/>
</dbReference>
<dbReference type="InterPro" id="IPR014359">
    <property type="entry name" value="KARI_prok"/>
</dbReference>
<dbReference type="InterPro" id="IPR036291">
    <property type="entry name" value="NAD(P)-bd_dom_sf"/>
</dbReference>
<dbReference type="NCBIfam" id="TIGR00465">
    <property type="entry name" value="ilvC"/>
    <property type="match status" value="1"/>
</dbReference>
<dbReference type="NCBIfam" id="NF004017">
    <property type="entry name" value="PRK05479.1"/>
    <property type="match status" value="1"/>
</dbReference>
<dbReference type="PANTHER" id="PTHR21371">
    <property type="entry name" value="KETOL-ACID REDUCTOISOMERASE, MITOCHONDRIAL"/>
    <property type="match status" value="1"/>
</dbReference>
<dbReference type="PANTHER" id="PTHR21371:SF1">
    <property type="entry name" value="KETOL-ACID REDUCTOISOMERASE, MITOCHONDRIAL"/>
    <property type="match status" value="1"/>
</dbReference>
<dbReference type="Pfam" id="PF01450">
    <property type="entry name" value="KARI_C"/>
    <property type="match status" value="1"/>
</dbReference>
<dbReference type="Pfam" id="PF07991">
    <property type="entry name" value="KARI_N"/>
    <property type="match status" value="1"/>
</dbReference>
<dbReference type="PIRSF" id="PIRSF000116">
    <property type="entry name" value="IlvC_gammaproteo"/>
    <property type="match status" value="1"/>
</dbReference>
<dbReference type="SUPFAM" id="SSF48179">
    <property type="entry name" value="6-phosphogluconate dehydrogenase C-terminal domain-like"/>
    <property type="match status" value="1"/>
</dbReference>
<dbReference type="SUPFAM" id="SSF51735">
    <property type="entry name" value="NAD(P)-binding Rossmann-fold domains"/>
    <property type="match status" value="1"/>
</dbReference>
<dbReference type="PROSITE" id="PS51851">
    <property type="entry name" value="KARI_C"/>
    <property type="match status" value="1"/>
</dbReference>
<dbReference type="PROSITE" id="PS51850">
    <property type="entry name" value="KARI_N"/>
    <property type="match status" value="1"/>
</dbReference>
<gene>
    <name evidence="1" type="primary">ilvC</name>
    <name type="ordered locus">MRA_3031</name>
</gene>
<evidence type="ECO:0000255" key="1">
    <source>
        <dbReference type="HAMAP-Rule" id="MF_00435"/>
    </source>
</evidence>
<evidence type="ECO:0000255" key="2">
    <source>
        <dbReference type="PROSITE-ProRule" id="PRU01197"/>
    </source>
</evidence>
<evidence type="ECO:0000255" key="3">
    <source>
        <dbReference type="PROSITE-ProRule" id="PRU01198"/>
    </source>
</evidence>
<evidence type="ECO:0000305" key="4"/>
<accession>A5U713</accession>
<organism>
    <name type="scientific">Mycobacterium tuberculosis (strain ATCC 25177 / H37Ra)</name>
    <dbReference type="NCBI Taxonomy" id="419947"/>
    <lineage>
        <taxon>Bacteria</taxon>
        <taxon>Bacillati</taxon>
        <taxon>Actinomycetota</taxon>
        <taxon>Actinomycetes</taxon>
        <taxon>Mycobacteriales</taxon>
        <taxon>Mycobacteriaceae</taxon>
        <taxon>Mycobacterium</taxon>
        <taxon>Mycobacterium tuberculosis complex</taxon>
    </lineage>
</organism>
<comment type="function">
    <text evidence="1">Involved in the biosynthesis of branched-chain amino acids (BCAA). Catalyzes an alkyl-migration followed by a ketol-acid reduction of (S)-2-acetolactate (S2AL) to yield (R)-2,3-dihydroxy-isovalerate. In the isomerase reaction, S2AL is rearranged via a Mg-dependent methyl migration to produce 3-hydroxy-3-methyl-2-ketobutyrate (HMKB). In the reductase reaction, this 2-ketoacid undergoes a metal-dependent reduction by NADPH to yield (R)-2,3-dihydroxy-isovalerate.</text>
</comment>
<comment type="catalytic activity">
    <reaction evidence="1">
        <text>(2R)-2,3-dihydroxy-3-methylbutanoate + NADP(+) = (2S)-2-acetolactate + NADPH + H(+)</text>
        <dbReference type="Rhea" id="RHEA:22068"/>
        <dbReference type="ChEBI" id="CHEBI:15378"/>
        <dbReference type="ChEBI" id="CHEBI:49072"/>
        <dbReference type="ChEBI" id="CHEBI:57783"/>
        <dbReference type="ChEBI" id="CHEBI:58349"/>
        <dbReference type="ChEBI" id="CHEBI:58476"/>
        <dbReference type="EC" id="1.1.1.86"/>
    </reaction>
</comment>
<comment type="catalytic activity">
    <reaction evidence="1">
        <text>(2R,3R)-2,3-dihydroxy-3-methylpentanoate + NADP(+) = (S)-2-ethyl-2-hydroxy-3-oxobutanoate + NADPH + H(+)</text>
        <dbReference type="Rhea" id="RHEA:13493"/>
        <dbReference type="ChEBI" id="CHEBI:15378"/>
        <dbReference type="ChEBI" id="CHEBI:49256"/>
        <dbReference type="ChEBI" id="CHEBI:49258"/>
        <dbReference type="ChEBI" id="CHEBI:57783"/>
        <dbReference type="ChEBI" id="CHEBI:58349"/>
        <dbReference type="EC" id="1.1.1.86"/>
    </reaction>
</comment>
<comment type="cofactor">
    <cofactor evidence="1">
        <name>Mg(2+)</name>
        <dbReference type="ChEBI" id="CHEBI:18420"/>
    </cofactor>
    <text evidence="1">Binds 2 magnesium ions per subunit.</text>
</comment>
<comment type="pathway">
    <text evidence="1">Amino-acid biosynthesis; L-isoleucine biosynthesis; L-isoleucine from 2-oxobutanoate: step 2/4.</text>
</comment>
<comment type="pathway">
    <text evidence="1">Amino-acid biosynthesis; L-valine biosynthesis; L-valine from pyruvate: step 2/4.</text>
</comment>
<comment type="similarity">
    <text evidence="1">Belongs to the ketol-acid reductoisomerase family.</text>
</comment>
<comment type="sequence caution" evidence="4">
    <conflict type="erroneous initiation">
        <sequence resource="EMBL-CDS" id="ABQ74813"/>
    </conflict>
    <text>Truncated N-terminus.</text>
</comment>
<protein>
    <recommendedName>
        <fullName evidence="1">Ketol-acid reductoisomerase (NADP(+))</fullName>
        <shortName evidence="1">KARI</shortName>
        <ecNumber evidence="1">1.1.1.86</ecNumber>
    </recommendedName>
    <alternativeName>
        <fullName evidence="1">Acetohydroxy-acid isomeroreductase</fullName>
        <shortName evidence="1">AHIR</shortName>
    </alternativeName>
    <alternativeName>
        <fullName evidence="1">Alpha-keto-beta-hydroxylacyl reductoisomerase</fullName>
    </alternativeName>
    <alternativeName>
        <fullName evidence="1">Ketol-acid reductoisomerase type 1</fullName>
    </alternativeName>
    <alternativeName>
        <fullName evidence="1">Ketol-acid reductoisomerase type I</fullName>
    </alternativeName>
</protein>